<reference key="1">
    <citation type="journal article" date="2005" name="Nature">
        <title>The genome of the social amoeba Dictyostelium discoideum.</title>
        <authorList>
            <person name="Eichinger L."/>
            <person name="Pachebat J.A."/>
            <person name="Gloeckner G."/>
            <person name="Rajandream M.A."/>
            <person name="Sucgang R."/>
            <person name="Berriman M."/>
            <person name="Song J."/>
            <person name="Olsen R."/>
            <person name="Szafranski K."/>
            <person name="Xu Q."/>
            <person name="Tunggal B."/>
            <person name="Kummerfeld S."/>
            <person name="Madera M."/>
            <person name="Konfortov B.A."/>
            <person name="Rivero F."/>
            <person name="Bankier A.T."/>
            <person name="Lehmann R."/>
            <person name="Hamlin N."/>
            <person name="Davies R."/>
            <person name="Gaudet P."/>
            <person name="Fey P."/>
            <person name="Pilcher K."/>
            <person name="Chen G."/>
            <person name="Saunders D."/>
            <person name="Sodergren E.J."/>
            <person name="Davis P."/>
            <person name="Kerhornou A."/>
            <person name="Nie X."/>
            <person name="Hall N."/>
            <person name="Anjard C."/>
            <person name="Hemphill L."/>
            <person name="Bason N."/>
            <person name="Farbrother P."/>
            <person name="Desany B."/>
            <person name="Just E."/>
            <person name="Morio T."/>
            <person name="Rost R."/>
            <person name="Churcher C.M."/>
            <person name="Cooper J."/>
            <person name="Haydock S."/>
            <person name="van Driessche N."/>
            <person name="Cronin A."/>
            <person name="Goodhead I."/>
            <person name="Muzny D.M."/>
            <person name="Mourier T."/>
            <person name="Pain A."/>
            <person name="Lu M."/>
            <person name="Harper D."/>
            <person name="Lindsay R."/>
            <person name="Hauser H."/>
            <person name="James K.D."/>
            <person name="Quiles M."/>
            <person name="Madan Babu M."/>
            <person name="Saito T."/>
            <person name="Buchrieser C."/>
            <person name="Wardroper A."/>
            <person name="Felder M."/>
            <person name="Thangavelu M."/>
            <person name="Johnson D."/>
            <person name="Knights A."/>
            <person name="Loulseged H."/>
            <person name="Mungall K.L."/>
            <person name="Oliver K."/>
            <person name="Price C."/>
            <person name="Quail M.A."/>
            <person name="Urushihara H."/>
            <person name="Hernandez J."/>
            <person name="Rabbinowitsch E."/>
            <person name="Steffen D."/>
            <person name="Sanders M."/>
            <person name="Ma J."/>
            <person name="Kohara Y."/>
            <person name="Sharp S."/>
            <person name="Simmonds M.N."/>
            <person name="Spiegler S."/>
            <person name="Tivey A."/>
            <person name="Sugano S."/>
            <person name="White B."/>
            <person name="Walker D."/>
            <person name="Woodward J.R."/>
            <person name="Winckler T."/>
            <person name="Tanaka Y."/>
            <person name="Shaulsky G."/>
            <person name="Schleicher M."/>
            <person name="Weinstock G.M."/>
            <person name="Rosenthal A."/>
            <person name="Cox E.C."/>
            <person name="Chisholm R.L."/>
            <person name="Gibbs R.A."/>
            <person name="Loomis W.F."/>
            <person name="Platzer M."/>
            <person name="Kay R.R."/>
            <person name="Williams J.G."/>
            <person name="Dear P.H."/>
            <person name="Noegel A.A."/>
            <person name="Barrell B.G."/>
            <person name="Kuspa A."/>
        </authorList>
    </citation>
    <scope>NUCLEOTIDE SEQUENCE [LARGE SCALE GENOMIC DNA]</scope>
    <source>
        <strain>AX4</strain>
    </source>
</reference>
<feature type="chain" id="PRO_0000331447" description="UBX domain-containing protein 7 homolog">
    <location>
        <begin position="1"/>
        <end position="503"/>
    </location>
</feature>
<feature type="domain" description="UIM" evidence="1">
    <location>
        <begin position="284"/>
        <end position="303"/>
    </location>
</feature>
<feature type="domain" description="UBX" evidence="2">
    <location>
        <begin position="424"/>
        <end position="500"/>
    </location>
</feature>
<feature type="region of interest" description="Disordered" evidence="3">
    <location>
        <begin position="47"/>
        <end position="80"/>
    </location>
</feature>
<feature type="region of interest" description="Disordered" evidence="3">
    <location>
        <begin position="262"/>
        <end position="284"/>
    </location>
</feature>
<feature type="region of interest" description="Disordered" evidence="3">
    <location>
        <begin position="299"/>
        <end position="389"/>
    </location>
</feature>
<feature type="compositionally biased region" description="Low complexity" evidence="3">
    <location>
        <begin position="50"/>
        <end position="71"/>
    </location>
</feature>
<feature type="compositionally biased region" description="Low complexity" evidence="3">
    <location>
        <begin position="314"/>
        <end position="350"/>
    </location>
</feature>
<feature type="compositionally biased region" description="Acidic residues" evidence="3">
    <location>
        <begin position="362"/>
        <end position="387"/>
    </location>
</feature>
<evidence type="ECO:0000255" key="1">
    <source>
        <dbReference type="PROSITE-ProRule" id="PRU00213"/>
    </source>
</evidence>
<evidence type="ECO:0000255" key="2">
    <source>
        <dbReference type="PROSITE-ProRule" id="PRU00215"/>
    </source>
</evidence>
<evidence type="ECO:0000256" key="3">
    <source>
        <dbReference type="SAM" id="MobiDB-lite"/>
    </source>
</evidence>
<accession>Q55BU7</accession>
<proteinExistence type="predicted"/>
<dbReference type="EMBL" id="AAFI02000005">
    <property type="protein sequence ID" value="EAL72529.1"/>
    <property type="molecule type" value="Genomic_DNA"/>
</dbReference>
<dbReference type="RefSeq" id="XP_646734.1">
    <property type="nucleotide sequence ID" value="XM_641642.1"/>
</dbReference>
<dbReference type="SMR" id="Q55BU7"/>
<dbReference type="FunCoup" id="Q55BU7">
    <property type="interactions" value="2"/>
</dbReference>
<dbReference type="STRING" id="44689.Q55BU7"/>
<dbReference type="PaxDb" id="44689-DDB0304448"/>
<dbReference type="EnsemblProtists" id="EAL72529">
    <property type="protein sequence ID" value="EAL72529"/>
    <property type="gene ID" value="DDB_G0270358"/>
</dbReference>
<dbReference type="GeneID" id="8617706"/>
<dbReference type="KEGG" id="ddi:DDB_G0270358"/>
<dbReference type="dictyBase" id="DDB_G0270358"/>
<dbReference type="VEuPathDB" id="AmoebaDB:DDB_G0270358"/>
<dbReference type="eggNOG" id="KOG1364">
    <property type="taxonomic scope" value="Eukaryota"/>
</dbReference>
<dbReference type="HOGENOM" id="CLU_542316_0_0_1"/>
<dbReference type="InParanoid" id="Q55BU7"/>
<dbReference type="OMA" id="CAFPRKS"/>
<dbReference type="PhylomeDB" id="Q55BU7"/>
<dbReference type="Reactome" id="R-DDI-8951664">
    <property type="pathway name" value="Neddylation"/>
</dbReference>
<dbReference type="Reactome" id="R-DDI-9755511">
    <property type="pathway name" value="KEAP1-NFE2L2 pathway"/>
</dbReference>
<dbReference type="PRO" id="PR:Q55BU7"/>
<dbReference type="Proteomes" id="UP000002195">
    <property type="component" value="Chromosome 1"/>
</dbReference>
<dbReference type="GO" id="GO:0005634">
    <property type="term" value="C:nucleus"/>
    <property type="evidence" value="ECO:0000318"/>
    <property type="project" value="GO_Central"/>
</dbReference>
<dbReference type="GO" id="GO:0043130">
    <property type="term" value="F:ubiquitin binding"/>
    <property type="evidence" value="ECO:0000318"/>
    <property type="project" value="GO_Central"/>
</dbReference>
<dbReference type="GO" id="GO:0043161">
    <property type="term" value="P:proteasome-mediated ubiquitin-dependent protein catabolic process"/>
    <property type="evidence" value="ECO:0000318"/>
    <property type="project" value="GO_Central"/>
</dbReference>
<dbReference type="CDD" id="cd02958">
    <property type="entry name" value="UAS"/>
    <property type="match status" value="1"/>
</dbReference>
<dbReference type="CDD" id="cd14273">
    <property type="entry name" value="UBA_TAP-C_like"/>
    <property type="match status" value="1"/>
</dbReference>
<dbReference type="CDD" id="cd01767">
    <property type="entry name" value="UBX"/>
    <property type="match status" value="1"/>
</dbReference>
<dbReference type="Gene3D" id="1.10.8.10">
    <property type="entry name" value="DNA helicase RuvA subunit, C-terminal domain"/>
    <property type="match status" value="1"/>
</dbReference>
<dbReference type="Gene3D" id="3.40.30.10">
    <property type="entry name" value="Glutaredoxin"/>
    <property type="match status" value="1"/>
</dbReference>
<dbReference type="Gene3D" id="3.10.20.90">
    <property type="entry name" value="Phosphatidylinositol 3-kinase Catalytic Subunit, Chain A, domain 1"/>
    <property type="match status" value="1"/>
</dbReference>
<dbReference type="InterPro" id="IPR036249">
    <property type="entry name" value="Thioredoxin-like_sf"/>
</dbReference>
<dbReference type="InterPro" id="IPR006577">
    <property type="entry name" value="UAS"/>
</dbReference>
<dbReference type="InterPro" id="IPR009060">
    <property type="entry name" value="UBA-like_sf"/>
</dbReference>
<dbReference type="InterPro" id="IPR029071">
    <property type="entry name" value="Ubiquitin-like_domsf"/>
</dbReference>
<dbReference type="InterPro" id="IPR017346">
    <property type="entry name" value="UBX_7/2"/>
</dbReference>
<dbReference type="InterPro" id="IPR001012">
    <property type="entry name" value="UBX_dom"/>
</dbReference>
<dbReference type="InterPro" id="IPR050730">
    <property type="entry name" value="UBX_domain-protein"/>
</dbReference>
<dbReference type="InterPro" id="IPR003903">
    <property type="entry name" value="UIM_dom"/>
</dbReference>
<dbReference type="PANTHER" id="PTHR23322">
    <property type="entry name" value="FAS-ASSOCIATED PROTEIN"/>
    <property type="match status" value="1"/>
</dbReference>
<dbReference type="PANTHER" id="PTHR23322:SF6">
    <property type="entry name" value="UBX DOMAIN-CONTAINING PROTEIN 7"/>
    <property type="match status" value="1"/>
</dbReference>
<dbReference type="Pfam" id="PF13899">
    <property type="entry name" value="Thioredoxin_7"/>
    <property type="match status" value="1"/>
</dbReference>
<dbReference type="Pfam" id="PF14555">
    <property type="entry name" value="UBA_4"/>
    <property type="match status" value="1"/>
</dbReference>
<dbReference type="Pfam" id="PF00789">
    <property type="entry name" value="UBX"/>
    <property type="match status" value="1"/>
</dbReference>
<dbReference type="PIRSF" id="PIRSF037991">
    <property type="entry name" value="UCP037991_UBX7/2"/>
    <property type="match status" value="1"/>
</dbReference>
<dbReference type="SMART" id="SM00594">
    <property type="entry name" value="UAS"/>
    <property type="match status" value="1"/>
</dbReference>
<dbReference type="SMART" id="SM00166">
    <property type="entry name" value="UBX"/>
    <property type="match status" value="1"/>
</dbReference>
<dbReference type="SUPFAM" id="SSF52833">
    <property type="entry name" value="Thioredoxin-like"/>
    <property type="match status" value="1"/>
</dbReference>
<dbReference type="SUPFAM" id="SSF46934">
    <property type="entry name" value="UBA-like"/>
    <property type="match status" value="1"/>
</dbReference>
<dbReference type="SUPFAM" id="SSF54236">
    <property type="entry name" value="Ubiquitin-like"/>
    <property type="match status" value="1"/>
</dbReference>
<dbReference type="PROSITE" id="PS50033">
    <property type="entry name" value="UBX"/>
    <property type="match status" value="1"/>
</dbReference>
<dbReference type="PROSITE" id="PS50330">
    <property type="entry name" value="UIM"/>
    <property type="match status" value="1"/>
</dbReference>
<gene>
    <name type="primary">ubxd7</name>
    <name type="ORF">DDB_G0270358</name>
</gene>
<sequence>MEDPDILSNFLSITGCDDSSLATTILENNNWDVERSVDFFFTMNDPSNVKPTTSSKKTSSPPTASSSSASSEFDYNEDEFRDPIPQKMDKLVDHYYQPTQRSYQKQTNVFEAFRDFEKERGINQDKATEKQKSLSELFKPPLDILTFGTFDEIKKMAEQKKYFVLVNIQDVQEFDCQKLNRDTWSNKDLKELIGENFVFWQVNSANPEGKWFTQIYPVFKFPYIAIIDPRTGQKLQDMTGFIDAEEMAQYLVTFLSTNSFSGQIDPPPSSSSSGASKKQKKYNTEDEELELAIALSLKQEQERNSKSGSTSPLSQQQQQQQQQNNNNNNNNNSNNNNSTSTTTTTSTTTTKILGTNNKKDEKEDEDDVEEKDEDFEDDDEIEEDNYDDNYYYGETVQKEISEEEQKKVEIKQLVEKIQVTSKIGTEGDCIIQVRCPGGETLKGQFHSHDQIKNIYYYVQVKTGISNFKLFTSFPKLDLSGELMSKTLKELDLAPRAVLNMLQE</sequence>
<protein>
    <recommendedName>
        <fullName>UBX domain-containing protein 7 homolog</fullName>
    </recommendedName>
</protein>
<keyword id="KW-1185">Reference proteome</keyword>
<organism>
    <name type="scientific">Dictyostelium discoideum</name>
    <name type="common">Social amoeba</name>
    <dbReference type="NCBI Taxonomy" id="44689"/>
    <lineage>
        <taxon>Eukaryota</taxon>
        <taxon>Amoebozoa</taxon>
        <taxon>Evosea</taxon>
        <taxon>Eumycetozoa</taxon>
        <taxon>Dictyostelia</taxon>
        <taxon>Dictyosteliales</taxon>
        <taxon>Dictyosteliaceae</taxon>
        <taxon>Dictyostelium</taxon>
    </lineage>
</organism>
<name>UBXN7_DICDI</name>